<dbReference type="EMBL" id="U13253">
    <property type="protein sequence ID" value="AAA86680.1"/>
    <property type="molecule type" value="mRNA"/>
</dbReference>
<dbReference type="EMBL" id="S69874">
    <property type="protein sequence ID" value="AAB30574.1"/>
    <property type="molecule type" value="mRNA"/>
</dbReference>
<dbReference type="EMBL" id="S83247">
    <property type="protein sequence ID" value="AAB46848.1"/>
    <property type="molecule type" value="mRNA"/>
</dbReference>
<dbReference type="PIR" id="JC2201">
    <property type="entry name" value="JC2201"/>
</dbReference>
<dbReference type="RefSeq" id="NP_665885.2">
    <property type="nucleotide sequence ID" value="NM_145878.2"/>
</dbReference>
<dbReference type="SMR" id="P55053"/>
<dbReference type="FunCoup" id="P55053">
    <property type="interactions" value="813"/>
</dbReference>
<dbReference type="STRING" id="10116.ENSRNOP00000064809"/>
<dbReference type="iPTMnet" id="P55053"/>
<dbReference type="PhosphoSitePlus" id="P55053"/>
<dbReference type="jPOST" id="P55053"/>
<dbReference type="PaxDb" id="10116-ENSRNOP00000064809"/>
<dbReference type="GeneID" id="140868"/>
<dbReference type="KEGG" id="rno:140868"/>
<dbReference type="AGR" id="RGD:70997"/>
<dbReference type="CTD" id="2171"/>
<dbReference type="RGD" id="70997">
    <property type="gene designation" value="Fabp5"/>
</dbReference>
<dbReference type="VEuPathDB" id="HostDB:ENSRNOG00000049075"/>
<dbReference type="eggNOG" id="KOG4015">
    <property type="taxonomic scope" value="Eukaryota"/>
</dbReference>
<dbReference type="HOGENOM" id="CLU_113772_0_0_1"/>
<dbReference type="InParanoid" id="P55053"/>
<dbReference type="OrthoDB" id="412780at2759"/>
<dbReference type="PhylomeDB" id="P55053"/>
<dbReference type="Reactome" id="R-RNO-163560">
    <property type="pathway name" value="Triglyceride catabolism"/>
</dbReference>
<dbReference type="Reactome" id="R-RNO-5362517">
    <property type="pathway name" value="Signaling by Retinoic Acid"/>
</dbReference>
<dbReference type="Reactome" id="R-RNO-6798695">
    <property type="pathway name" value="Neutrophil degranulation"/>
</dbReference>
<dbReference type="PRO" id="PR:P55053"/>
<dbReference type="Proteomes" id="UP000002494">
    <property type="component" value="Chromosome 2"/>
</dbReference>
<dbReference type="Bgee" id="ENSRNOG00000049075">
    <property type="expression patterns" value="Expressed in esophagus and 20 other cell types or tissues"/>
</dbReference>
<dbReference type="GO" id="GO:0005737">
    <property type="term" value="C:cytoplasm"/>
    <property type="evidence" value="ECO:0000266"/>
    <property type="project" value="RGD"/>
</dbReference>
<dbReference type="GO" id="GO:0005829">
    <property type="term" value="C:cytosol"/>
    <property type="evidence" value="ECO:0000318"/>
    <property type="project" value="GO_Central"/>
</dbReference>
<dbReference type="GO" id="GO:0005615">
    <property type="term" value="C:extracellular space"/>
    <property type="evidence" value="ECO:0000250"/>
    <property type="project" value="UniProtKB"/>
</dbReference>
<dbReference type="GO" id="GO:0098978">
    <property type="term" value="C:glutamatergic synapse"/>
    <property type="evidence" value="ECO:0000266"/>
    <property type="project" value="RGD"/>
</dbReference>
<dbReference type="GO" id="GO:0005634">
    <property type="term" value="C:nucleus"/>
    <property type="evidence" value="ECO:0000266"/>
    <property type="project" value="RGD"/>
</dbReference>
<dbReference type="GO" id="GO:0099524">
    <property type="term" value="C:postsynaptic cytosol"/>
    <property type="evidence" value="ECO:0000266"/>
    <property type="project" value="RGD"/>
</dbReference>
<dbReference type="GO" id="GO:0014069">
    <property type="term" value="C:postsynaptic density"/>
    <property type="evidence" value="ECO:0000250"/>
    <property type="project" value="UniProtKB"/>
</dbReference>
<dbReference type="GO" id="GO:0099092">
    <property type="term" value="C:postsynaptic density, intracellular component"/>
    <property type="evidence" value="ECO:0000266"/>
    <property type="project" value="RGD"/>
</dbReference>
<dbReference type="GO" id="GO:0045202">
    <property type="term" value="C:synapse"/>
    <property type="evidence" value="ECO:0000250"/>
    <property type="project" value="UniProtKB"/>
</dbReference>
<dbReference type="GO" id="GO:0005504">
    <property type="term" value="F:fatty acid binding"/>
    <property type="evidence" value="ECO:0000314"/>
    <property type="project" value="RGD"/>
</dbReference>
<dbReference type="GO" id="GO:0042802">
    <property type="term" value="F:identical protein binding"/>
    <property type="evidence" value="ECO:0000266"/>
    <property type="project" value="RGD"/>
</dbReference>
<dbReference type="GO" id="GO:0005324">
    <property type="term" value="F:long-chain fatty acid transmembrane transporter activity"/>
    <property type="evidence" value="ECO:0000266"/>
    <property type="project" value="RGD"/>
</dbReference>
<dbReference type="GO" id="GO:0001972">
    <property type="term" value="F:retinoic acid binding"/>
    <property type="evidence" value="ECO:0000266"/>
    <property type="project" value="RGD"/>
</dbReference>
<dbReference type="GO" id="GO:0015908">
    <property type="term" value="P:fatty acid transport"/>
    <property type="evidence" value="ECO:0000318"/>
    <property type="project" value="GO_Central"/>
</dbReference>
<dbReference type="GO" id="GO:0042593">
    <property type="term" value="P:glucose homeostasis"/>
    <property type="evidence" value="ECO:0000266"/>
    <property type="project" value="RGD"/>
</dbReference>
<dbReference type="GO" id="GO:0006006">
    <property type="term" value="P:glucose metabolic process"/>
    <property type="evidence" value="ECO:0000266"/>
    <property type="project" value="RGD"/>
</dbReference>
<dbReference type="GO" id="GO:0006629">
    <property type="term" value="P:lipid metabolic process"/>
    <property type="evidence" value="ECO:0000266"/>
    <property type="project" value="RGD"/>
</dbReference>
<dbReference type="GO" id="GO:1990379">
    <property type="term" value="P:lipid transport across blood-brain barrier"/>
    <property type="evidence" value="ECO:0000266"/>
    <property type="project" value="RGD"/>
</dbReference>
<dbReference type="GO" id="GO:0015909">
    <property type="term" value="P:long-chain fatty acid transport"/>
    <property type="evidence" value="ECO:0000266"/>
    <property type="project" value="RGD"/>
</dbReference>
<dbReference type="GO" id="GO:0010829">
    <property type="term" value="P:negative regulation of D-glucose transmembrane transport"/>
    <property type="evidence" value="ECO:0000266"/>
    <property type="project" value="RGD"/>
</dbReference>
<dbReference type="GO" id="GO:0006656">
    <property type="term" value="P:phosphatidylcholine biosynthetic process"/>
    <property type="evidence" value="ECO:0000266"/>
    <property type="project" value="RGD"/>
</dbReference>
<dbReference type="GO" id="GO:0120162">
    <property type="term" value="P:positive regulation of cold-induced thermogenesis"/>
    <property type="evidence" value="ECO:0000250"/>
    <property type="project" value="YuBioLab"/>
</dbReference>
<dbReference type="GO" id="GO:0035360">
    <property type="term" value="P:positive regulation of peroxisome proliferator activated receptor signaling pathway"/>
    <property type="evidence" value="ECO:0000266"/>
    <property type="project" value="RGD"/>
</dbReference>
<dbReference type="GO" id="GO:0031392">
    <property type="term" value="P:regulation of prostaglandin biosynthetic process"/>
    <property type="evidence" value="ECO:0000266"/>
    <property type="project" value="RGD"/>
</dbReference>
<dbReference type="GO" id="GO:0099178">
    <property type="term" value="P:regulation of retrograde trans-synaptic signaling by endocanabinoid"/>
    <property type="evidence" value="ECO:0000250"/>
    <property type="project" value="UniProtKB"/>
</dbReference>
<dbReference type="GO" id="GO:0051930">
    <property type="term" value="P:regulation of sensory perception of pain"/>
    <property type="evidence" value="ECO:0000266"/>
    <property type="project" value="RGD"/>
</dbReference>
<dbReference type="GO" id="GO:0098921">
    <property type="term" value="P:retrograde trans-synaptic signaling by endocannabinoid"/>
    <property type="evidence" value="ECO:0000266"/>
    <property type="project" value="RGD"/>
</dbReference>
<dbReference type="CDD" id="cd19468">
    <property type="entry name" value="FABP5"/>
    <property type="match status" value="1"/>
</dbReference>
<dbReference type="FunFam" id="2.40.128.20:FF:000001">
    <property type="entry name" value="Fatty acid-binding protein, adipocyte"/>
    <property type="match status" value="1"/>
</dbReference>
<dbReference type="Gene3D" id="2.40.128.20">
    <property type="match status" value="1"/>
</dbReference>
<dbReference type="InterPro" id="IPR012674">
    <property type="entry name" value="Calycin"/>
</dbReference>
<dbReference type="InterPro" id="IPR000463">
    <property type="entry name" value="Fatty_acid-bd"/>
</dbReference>
<dbReference type="InterPro" id="IPR031259">
    <property type="entry name" value="ILBP"/>
</dbReference>
<dbReference type="InterPro" id="IPR000566">
    <property type="entry name" value="Lipocln_cytosolic_FA-bd_dom"/>
</dbReference>
<dbReference type="PANTHER" id="PTHR11955">
    <property type="entry name" value="FATTY ACID BINDING PROTEIN"/>
    <property type="match status" value="1"/>
</dbReference>
<dbReference type="Pfam" id="PF00061">
    <property type="entry name" value="Lipocalin"/>
    <property type="match status" value="1"/>
</dbReference>
<dbReference type="PRINTS" id="PR00178">
    <property type="entry name" value="FATTYACIDBP"/>
</dbReference>
<dbReference type="SUPFAM" id="SSF50814">
    <property type="entry name" value="Lipocalins"/>
    <property type="match status" value="1"/>
</dbReference>
<dbReference type="PROSITE" id="PS00214">
    <property type="entry name" value="FABP"/>
    <property type="match status" value="1"/>
</dbReference>
<comment type="function">
    <text evidence="2 3">Intracellular carrier for long-chain fatty acids and related active lipids, such as endocannabinoids, that regulate the metabolism and actions of the ligands they bind. In addition to the cytosolic transport, selectively delivers specific fatty acids from the cytosol to the nucleus, wherein they activate nuclear receptors (By similarity). Delivers retinoic acid to the nuclear receptor peroxisome proliferator-activated receptor delta; which promotes proliferation and survival. May also serve as a synaptic carrier of endocannabinoid at central synapses and thus controls retrograde endocannabinoid signaling. Modulates inflammation by regulating PTGES induction via NF-kappa-B activation, and prostaglandin E2 (PGE2) biosynthesis during inflammation (By similarity).</text>
</comment>
<comment type="catalytic activity">
    <reaction evidence="2">
        <text>hexadecanoate(out) = hexadecanoate(in)</text>
        <dbReference type="Rhea" id="RHEA:45256"/>
        <dbReference type="ChEBI" id="CHEBI:7896"/>
    </reaction>
</comment>
<comment type="catalytic activity">
    <reaction evidence="2">
        <text>(9Z,12Z)-octadecadienoate(out) = (9Z,12Z)-octadecadienoate(in)</text>
        <dbReference type="Rhea" id="RHEA:45264"/>
        <dbReference type="ChEBI" id="CHEBI:30245"/>
    </reaction>
</comment>
<comment type="catalytic activity">
    <reaction evidence="2">
        <text>(9Z)-octadecenoate(out) = (9Z)-octadecenoate(in)</text>
        <dbReference type="Rhea" id="RHEA:33655"/>
        <dbReference type="ChEBI" id="CHEBI:30823"/>
    </reaction>
</comment>
<comment type="subunit">
    <text evidence="3">Monomer.</text>
</comment>
<comment type="subcellular location">
    <subcellularLocation>
        <location evidence="3">Cytoplasm</location>
    </subcellularLocation>
    <subcellularLocation>
        <location evidence="2">Nucleus</location>
    </subcellularLocation>
    <subcellularLocation>
        <location evidence="3">Synapse</location>
    </subcellularLocation>
    <subcellularLocation>
        <location evidence="3">Postsynaptic density</location>
    </subcellularLocation>
    <subcellularLocation>
        <location evidence="3">Secreted</location>
    </subcellularLocation>
    <text evidence="2 3">Localizes primarily to the cytoplasm. Upon certain ligand binding, a conformation change exposes a nuclear localization motif and the protein is transported into nucleus (By similarity). Secreted by astrocytes, but not by neurons (By similarity).</text>
</comment>
<comment type="domain">
    <text evidence="1">Forms a beta-barrel structure that accommodates hydrophobic ligands in its interior.</text>
</comment>
<comment type="similarity">
    <text evidence="5">Belongs to the calycin superfamily. Fatty-acid binding protein (FABP) family.</text>
</comment>
<protein>
    <recommendedName>
        <fullName evidence="5">Fatty acid-binding protein 5</fullName>
    </recommendedName>
    <alternativeName>
        <fullName>Cutaneous fatty acid-binding protein</fullName>
        <shortName>C-FABP</shortName>
    </alternativeName>
    <alternativeName>
        <fullName>DA11</fullName>
    </alternativeName>
    <alternativeName>
        <fullName>Epidermal-type fatty acid-binding protein</fullName>
        <shortName>E-FABP</shortName>
    </alternativeName>
    <alternativeName>
        <fullName>Fatty acid-binding protein, epidermal</fullName>
    </alternativeName>
</protein>
<name>FABP5_RAT</name>
<proteinExistence type="evidence at protein level"/>
<feature type="initiator methionine" description="Removed" evidence="2">
    <location>
        <position position="1"/>
    </location>
</feature>
<feature type="chain" id="PRO_0000067379" description="Fatty acid-binding protein 5">
    <location>
        <begin position="2"/>
        <end position="135"/>
    </location>
</feature>
<feature type="short sequence motif" description="Nuclear localization signal" evidence="2">
    <location>
        <begin position="24"/>
        <end position="34"/>
    </location>
</feature>
<feature type="binding site" evidence="2">
    <location>
        <position position="43"/>
    </location>
    <ligand>
        <name>N-eicosanoyl ethanolamine</name>
        <dbReference type="ChEBI" id="CHEBI:85253"/>
    </ligand>
</feature>
<feature type="binding site" evidence="2">
    <location>
        <position position="109"/>
    </location>
    <ligand>
        <name>N-eicosanoyl ethanolamine</name>
        <dbReference type="ChEBI" id="CHEBI:85253"/>
    </ligand>
</feature>
<feature type="binding site" evidence="2">
    <location>
        <begin position="129"/>
        <end position="131"/>
    </location>
    <ligand>
        <name>(9Z,12Z)-octadecadienoate</name>
        <dbReference type="ChEBI" id="CHEBI:30245"/>
    </ligand>
</feature>
<feature type="binding site" evidence="2">
    <location>
        <position position="131"/>
    </location>
    <ligand>
        <name>hexadecanoate</name>
        <dbReference type="ChEBI" id="CHEBI:7896"/>
    </ligand>
</feature>
<feature type="binding site" evidence="2">
    <location>
        <position position="131"/>
    </location>
    <ligand>
        <name>N-eicosanoyl ethanolamine</name>
        <dbReference type="ChEBI" id="CHEBI:85253"/>
    </ligand>
</feature>
<feature type="modified residue" description="N-acetylalanine" evidence="2">
    <location>
        <position position="2"/>
    </location>
</feature>
<feature type="modified residue" description="Phosphoserine" evidence="7">
    <location>
        <position position="3"/>
    </location>
</feature>
<feature type="modified residue" description="Phosphotyrosine" evidence="2">
    <location>
        <position position="131"/>
    </location>
</feature>
<feature type="disulfide bond" evidence="4">
    <location>
        <begin position="120"/>
        <end position="127"/>
    </location>
</feature>
<feature type="sequence conflict" description="In Ref. 1; AAA86680." evidence="5" ref="1">
    <original>G</original>
    <variation>N</variation>
    <location>
        <position position="49"/>
    </location>
</feature>
<feature type="sequence conflict" description="In Ref. 3; AAB46848." evidence="5" ref="3">
    <original>K</original>
    <variation>N</variation>
    <location>
        <position position="112"/>
    </location>
</feature>
<reference key="1">
    <citation type="journal article" date="1995" name="Gene">
        <title>Lens epithelial cell mRNA, II. Expression of a mRNA encoding a lipid-binding protein in rat lens epithelial cells.</title>
        <authorList>
            <person name="Wen Y."/>
            <person name="Li G.W."/>
            <person name="Chen P."/>
            <person name="Wong E."/>
            <person name="Bekhor I."/>
        </authorList>
    </citation>
    <scope>NUCLEOTIDE SEQUENCE [MRNA]</scope>
    <source>
        <strain>Sprague-Dawley</strain>
        <tissue>Lens</tissue>
    </source>
</reference>
<reference key="2">
    <citation type="journal article" date="1994" name="Biochem. Biophys. Res. Commun.">
        <title>Molecular cloning of a cDNA encoding a novel fatty acid-binding protein from rat skin.</title>
        <authorList>
            <person name="Watanabe R."/>
            <person name="Fujii H."/>
            <person name="Odani S."/>
            <person name="Sakakibara J."/>
            <person name="Yamamoto A."/>
            <person name="Ito M."/>
            <person name="Ono T."/>
        </authorList>
    </citation>
    <scope>NUCLEOTIDE SEQUENCE [MRNA]</scope>
    <scope>PARTIAL PROTEIN SEQUENCE</scope>
    <source>
        <strain>Sprague-Dawley</strain>
        <tissue>Skin</tissue>
    </source>
</reference>
<reference key="3">
    <citation type="journal article" date="1996" name="J. Neurosci. Res.">
        <title>Fatty acid binding protein is induced in neurons of the dorsal root ganglia after peripheral nerve injury.</title>
        <authorList>
            <person name="de Leon M."/>
            <person name="Welcher A.A."/>
            <person name="Nahin R.H."/>
            <person name="Liu Y."/>
            <person name="Ruda M.A."/>
            <person name="Shooter E.M."/>
            <person name="Molina C.A."/>
        </authorList>
    </citation>
    <scope>NUCLEOTIDE SEQUENCE [MRNA]</scope>
    <source>
        <strain>Sprague-Dawley</strain>
        <tissue>Nerve</tissue>
    </source>
</reference>
<reference key="4">
    <citation type="journal article" date="2000" name="J. Biochem.">
        <title>Disulfide bonds in rat cutaneous fatty acid-binding protein.</title>
        <authorList>
            <person name="Odani S."/>
            <person name="Namba Y."/>
            <person name="Ishii A."/>
            <person name="Ono T."/>
            <person name="Fujii H."/>
        </authorList>
    </citation>
    <scope>NUCLEOTIDE SEQUENCE [MRNA]</scope>
    <scope>IDENTIFICATION BY MASS SPECTROMETRY</scope>
    <scope>DISULFIDE BOND</scope>
</reference>
<reference key="5">
    <citation type="submission" date="2007-07" db="UniProtKB">
        <authorList>
            <person name="Lubec G."/>
            <person name="Afjehi-Sadat L."/>
            <person name="Kang S.U."/>
        </authorList>
    </citation>
    <scope>PROTEIN SEQUENCE OF 13-33 AND 73-99</scope>
    <scope>IDENTIFICATION BY MASS SPECTROMETRY</scope>
    <source>
        <strain>Sprague-Dawley</strain>
        <tissue>Brain</tissue>
        <tissue>Spinal cord</tissue>
    </source>
</reference>
<reference key="6">
    <citation type="journal article" date="2012" name="Nat. Commun.">
        <title>Quantitative maps of protein phosphorylation sites across 14 different rat organs and tissues.</title>
        <authorList>
            <person name="Lundby A."/>
            <person name="Secher A."/>
            <person name="Lage K."/>
            <person name="Nordsborg N.B."/>
            <person name="Dmytriyev A."/>
            <person name="Lundby C."/>
            <person name="Olsen J.V."/>
        </authorList>
    </citation>
    <scope>PHOSPHORYLATION [LARGE SCALE ANALYSIS] AT SER-3</scope>
    <scope>IDENTIFICATION BY MASS SPECTROMETRY [LARGE SCALE ANALYSIS]</scope>
</reference>
<sequence length="135" mass="15059">MASLKDLEGKWRLVESHGFEDYMKELGVGLALRKMGAMAKPDCIITLDGNNLTVKTESTVKTTVFSCTLGEKFDETTADGRKTETVCTFTDGALVQHQKWEGKESTITRKLKDGKMVVECVMNNAICTRVYEKVQ</sequence>
<keyword id="KW-0007">Acetylation</keyword>
<keyword id="KW-0963">Cytoplasm</keyword>
<keyword id="KW-0903">Direct protein sequencing</keyword>
<keyword id="KW-1015">Disulfide bond</keyword>
<keyword id="KW-0445">Lipid transport</keyword>
<keyword id="KW-0446">Lipid-binding</keyword>
<keyword id="KW-0539">Nucleus</keyword>
<keyword id="KW-0597">Phosphoprotein</keyword>
<keyword id="KW-1185">Reference proteome</keyword>
<keyword id="KW-0964">Secreted</keyword>
<keyword id="KW-0770">Synapse</keyword>
<keyword id="KW-0813">Transport</keyword>
<gene>
    <name evidence="6" type="primary">Fabp5</name>
</gene>
<evidence type="ECO:0000250" key="1"/>
<evidence type="ECO:0000250" key="2">
    <source>
        <dbReference type="UniProtKB" id="Q01469"/>
    </source>
</evidence>
<evidence type="ECO:0000250" key="3">
    <source>
        <dbReference type="UniProtKB" id="Q05816"/>
    </source>
</evidence>
<evidence type="ECO:0000269" key="4">
    <source>
    </source>
</evidence>
<evidence type="ECO:0000305" key="5"/>
<evidence type="ECO:0000312" key="6">
    <source>
        <dbReference type="RGD" id="70997"/>
    </source>
</evidence>
<evidence type="ECO:0007744" key="7">
    <source>
    </source>
</evidence>
<accession>P55053</accession>
<accession>P97757</accession>
<organism>
    <name type="scientific">Rattus norvegicus</name>
    <name type="common">Rat</name>
    <dbReference type="NCBI Taxonomy" id="10116"/>
    <lineage>
        <taxon>Eukaryota</taxon>
        <taxon>Metazoa</taxon>
        <taxon>Chordata</taxon>
        <taxon>Craniata</taxon>
        <taxon>Vertebrata</taxon>
        <taxon>Euteleostomi</taxon>
        <taxon>Mammalia</taxon>
        <taxon>Eutheria</taxon>
        <taxon>Euarchontoglires</taxon>
        <taxon>Glires</taxon>
        <taxon>Rodentia</taxon>
        <taxon>Myomorpha</taxon>
        <taxon>Muroidea</taxon>
        <taxon>Muridae</taxon>
        <taxon>Murinae</taxon>
        <taxon>Rattus</taxon>
    </lineage>
</organism>